<gene>
    <name evidence="1" type="primary">groEL1</name>
    <name evidence="1" type="synonym">groL1</name>
    <name type="ordered locus">CV_3233</name>
</gene>
<feature type="chain" id="PRO_0000063336" description="Chaperonin GroEL 1">
    <location>
        <begin position="1"/>
        <end position="538"/>
    </location>
</feature>
<feature type="binding site" evidence="1">
    <location>
        <begin position="30"/>
        <end position="33"/>
    </location>
    <ligand>
        <name>ATP</name>
        <dbReference type="ChEBI" id="CHEBI:30616"/>
    </ligand>
</feature>
<feature type="binding site" evidence="1">
    <location>
        <position position="51"/>
    </location>
    <ligand>
        <name>ATP</name>
        <dbReference type="ChEBI" id="CHEBI:30616"/>
    </ligand>
</feature>
<feature type="binding site" evidence="1">
    <location>
        <begin position="87"/>
        <end position="91"/>
    </location>
    <ligand>
        <name>ATP</name>
        <dbReference type="ChEBI" id="CHEBI:30616"/>
    </ligand>
</feature>
<feature type="binding site" evidence="1">
    <location>
        <position position="415"/>
    </location>
    <ligand>
        <name>ATP</name>
        <dbReference type="ChEBI" id="CHEBI:30616"/>
    </ligand>
</feature>
<feature type="binding site" evidence="1">
    <location>
        <begin position="479"/>
        <end position="481"/>
    </location>
    <ligand>
        <name>ATP</name>
        <dbReference type="ChEBI" id="CHEBI:30616"/>
    </ligand>
</feature>
<feature type="binding site" evidence="1">
    <location>
        <position position="495"/>
    </location>
    <ligand>
        <name>ATP</name>
        <dbReference type="ChEBI" id="CHEBI:30616"/>
    </ligand>
</feature>
<name>CH601_CHRVO</name>
<evidence type="ECO:0000255" key="1">
    <source>
        <dbReference type="HAMAP-Rule" id="MF_00600"/>
    </source>
</evidence>
<dbReference type="EC" id="5.6.1.7" evidence="1"/>
<dbReference type="EMBL" id="AE016825">
    <property type="protein sequence ID" value="AAQ60898.1"/>
    <property type="molecule type" value="Genomic_DNA"/>
</dbReference>
<dbReference type="RefSeq" id="WP_011136780.1">
    <property type="nucleotide sequence ID" value="NC_005085.1"/>
</dbReference>
<dbReference type="SMR" id="Q7NT31"/>
<dbReference type="STRING" id="243365.CV_3233"/>
<dbReference type="KEGG" id="cvi:CV_3233"/>
<dbReference type="eggNOG" id="COG0459">
    <property type="taxonomic scope" value="Bacteria"/>
</dbReference>
<dbReference type="HOGENOM" id="CLU_016503_3_0_4"/>
<dbReference type="OrthoDB" id="9766614at2"/>
<dbReference type="Proteomes" id="UP000001424">
    <property type="component" value="Chromosome"/>
</dbReference>
<dbReference type="GO" id="GO:0005737">
    <property type="term" value="C:cytoplasm"/>
    <property type="evidence" value="ECO:0007669"/>
    <property type="project" value="UniProtKB-SubCell"/>
</dbReference>
<dbReference type="GO" id="GO:0005524">
    <property type="term" value="F:ATP binding"/>
    <property type="evidence" value="ECO:0007669"/>
    <property type="project" value="UniProtKB-UniRule"/>
</dbReference>
<dbReference type="GO" id="GO:0140662">
    <property type="term" value="F:ATP-dependent protein folding chaperone"/>
    <property type="evidence" value="ECO:0007669"/>
    <property type="project" value="InterPro"/>
</dbReference>
<dbReference type="GO" id="GO:0016853">
    <property type="term" value="F:isomerase activity"/>
    <property type="evidence" value="ECO:0007669"/>
    <property type="project" value="UniProtKB-KW"/>
</dbReference>
<dbReference type="GO" id="GO:0051082">
    <property type="term" value="F:unfolded protein binding"/>
    <property type="evidence" value="ECO:0007669"/>
    <property type="project" value="UniProtKB-UniRule"/>
</dbReference>
<dbReference type="GO" id="GO:0042026">
    <property type="term" value="P:protein refolding"/>
    <property type="evidence" value="ECO:0007669"/>
    <property type="project" value="UniProtKB-UniRule"/>
</dbReference>
<dbReference type="CDD" id="cd03344">
    <property type="entry name" value="GroEL"/>
    <property type="match status" value="1"/>
</dbReference>
<dbReference type="FunFam" id="1.10.560.10:FF:000001">
    <property type="entry name" value="60 kDa chaperonin"/>
    <property type="match status" value="1"/>
</dbReference>
<dbReference type="FunFam" id="3.50.7.10:FF:000001">
    <property type="entry name" value="60 kDa chaperonin"/>
    <property type="match status" value="1"/>
</dbReference>
<dbReference type="Gene3D" id="3.50.7.10">
    <property type="entry name" value="GroEL"/>
    <property type="match status" value="1"/>
</dbReference>
<dbReference type="Gene3D" id="1.10.560.10">
    <property type="entry name" value="GroEL-like equatorial domain"/>
    <property type="match status" value="1"/>
</dbReference>
<dbReference type="Gene3D" id="3.30.260.10">
    <property type="entry name" value="TCP-1-like chaperonin intermediate domain"/>
    <property type="match status" value="1"/>
</dbReference>
<dbReference type="HAMAP" id="MF_00600">
    <property type="entry name" value="CH60"/>
    <property type="match status" value="1"/>
</dbReference>
<dbReference type="InterPro" id="IPR018370">
    <property type="entry name" value="Chaperonin_Cpn60_CS"/>
</dbReference>
<dbReference type="InterPro" id="IPR001844">
    <property type="entry name" value="Cpn60/GroEL"/>
</dbReference>
<dbReference type="InterPro" id="IPR002423">
    <property type="entry name" value="Cpn60/GroEL/TCP-1"/>
</dbReference>
<dbReference type="InterPro" id="IPR027409">
    <property type="entry name" value="GroEL-like_apical_dom_sf"/>
</dbReference>
<dbReference type="InterPro" id="IPR027413">
    <property type="entry name" value="GROEL-like_equatorial_sf"/>
</dbReference>
<dbReference type="InterPro" id="IPR027410">
    <property type="entry name" value="TCP-1-like_intermed_sf"/>
</dbReference>
<dbReference type="NCBIfam" id="TIGR02348">
    <property type="entry name" value="GroEL"/>
    <property type="match status" value="1"/>
</dbReference>
<dbReference type="NCBIfam" id="NF000592">
    <property type="entry name" value="PRK00013.1"/>
    <property type="match status" value="1"/>
</dbReference>
<dbReference type="NCBIfam" id="NF009487">
    <property type="entry name" value="PRK12849.1"/>
    <property type="match status" value="1"/>
</dbReference>
<dbReference type="NCBIfam" id="NF009488">
    <property type="entry name" value="PRK12850.1"/>
    <property type="match status" value="1"/>
</dbReference>
<dbReference type="NCBIfam" id="NF009489">
    <property type="entry name" value="PRK12851.1"/>
    <property type="match status" value="1"/>
</dbReference>
<dbReference type="PANTHER" id="PTHR45633">
    <property type="entry name" value="60 KDA HEAT SHOCK PROTEIN, MITOCHONDRIAL"/>
    <property type="match status" value="1"/>
</dbReference>
<dbReference type="Pfam" id="PF00118">
    <property type="entry name" value="Cpn60_TCP1"/>
    <property type="match status" value="1"/>
</dbReference>
<dbReference type="PRINTS" id="PR00298">
    <property type="entry name" value="CHAPERONIN60"/>
</dbReference>
<dbReference type="SUPFAM" id="SSF52029">
    <property type="entry name" value="GroEL apical domain-like"/>
    <property type="match status" value="1"/>
</dbReference>
<dbReference type="SUPFAM" id="SSF48592">
    <property type="entry name" value="GroEL equatorial domain-like"/>
    <property type="match status" value="1"/>
</dbReference>
<dbReference type="SUPFAM" id="SSF54849">
    <property type="entry name" value="GroEL-intermediate domain like"/>
    <property type="match status" value="1"/>
</dbReference>
<dbReference type="PROSITE" id="PS00296">
    <property type="entry name" value="CHAPERONINS_CPN60"/>
    <property type="match status" value="1"/>
</dbReference>
<protein>
    <recommendedName>
        <fullName evidence="1">Chaperonin GroEL 1</fullName>
        <ecNumber evidence="1">5.6.1.7</ecNumber>
    </recommendedName>
    <alternativeName>
        <fullName evidence="1">60 kDa chaperonin 1</fullName>
    </alternativeName>
    <alternativeName>
        <fullName evidence="1">Chaperonin-60 1</fullName>
        <shortName evidence="1">Cpn60 1</shortName>
    </alternativeName>
</protein>
<accession>Q7NT31</accession>
<reference key="1">
    <citation type="journal article" date="2003" name="Proc. Natl. Acad. Sci. U.S.A.">
        <title>The complete genome sequence of Chromobacterium violaceum reveals remarkable and exploitable bacterial adaptability.</title>
        <authorList>
            <person name="Vasconcelos A.T.R."/>
            <person name="de Almeida D.F."/>
            <person name="Hungria M."/>
            <person name="Guimaraes C.T."/>
            <person name="Antonio R.V."/>
            <person name="Almeida F.C."/>
            <person name="de Almeida L.G.P."/>
            <person name="de Almeida R."/>
            <person name="Alves-Gomes J.A."/>
            <person name="Andrade E.M."/>
            <person name="Araripe J."/>
            <person name="de Araujo M.F.F."/>
            <person name="Astolfi-Filho S."/>
            <person name="Azevedo V."/>
            <person name="Baptista A.J."/>
            <person name="Bataus L.A.M."/>
            <person name="Batista J.S."/>
            <person name="Belo A."/>
            <person name="van den Berg C."/>
            <person name="Bogo M."/>
            <person name="Bonatto S."/>
            <person name="Bordignon J."/>
            <person name="Brigido M.M."/>
            <person name="Brito C.A."/>
            <person name="Brocchi M."/>
            <person name="Burity H.A."/>
            <person name="Camargo A.A."/>
            <person name="Cardoso D.D.P."/>
            <person name="Carneiro N.P."/>
            <person name="Carraro D.M."/>
            <person name="Carvalho C.M.B."/>
            <person name="Cascardo J.C.M."/>
            <person name="Cavada B.S."/>
            <person name="Chueire L.M.O."/>
            <person name="Creczynski-Pasa T.B."/>
            <person name="Cunha-Junior N.C."/>
            <person name="Fagundes N."/>
            <person name="Falcao C.L."/>
            <person name="Fantinatti F."/>
            <person name="Farias I.P."/>
            <person name="Felipe M.S.S."/>
            <person name="Ferrari L.P."/>
            <person name="Ferro J.A."/>
            <person name="Ferro M.I.T."/>
            <person name="Franco G.R."/>
            <person name="Freitas N.S.A."/>
            <person name="Furlan L.R."/>
            <person name="Gazzinelli R.T."/>
            <person name="Gomes E.A."/>
            <person name="Goncalves P.R."/>
            <person name="Grangeiro T.B."/>
            <person name="Grattapaglia D."/>
            <person name="Grisard E.C."/>
            <person name="Hanna E.S."/>
            <person name="Jardim S.N."/>
            <person name="Laurino J."/>
            <person name="Leoi L.C.T."/>
            <person name="Lima L.F.A."/>
            <person name="Loureiro M.F."/>
            <person name="Lyra M.C.C.P."/>
            <person name="Madeira H.M.F."/>
            <person name="Manfio G.P."/>
            <person name="Maranhao A.Q."/>
            <person name="Martins W.S."/>
            <person name="di Mauro S.M.Z."/>
            <person name="de Medeiros S.R.B."/>
            <person name="Meissner R.V."/>
            <person name="Moreira M.A.M."/>
            <person name="Nascimento F.F."/>
            <person name="Nicolas M.F."/>
            <person name="Oliveira J.G."/>
            <person name="Oliveira S.C."/>
            <person name="Paixao R.F.C."/>
            <person name="Parente J.A."/>
            <person name="Pedrosa F.O."/>
            <person name="Pena S.D.J."/>
            <person name="Pereira J.O."/>
            <person name="Pereira M."/>
            <person name="Pinto L.S.R.C."/>
            <person name="Pinto L.S."/>
            <person name="Porto J.I.R."/>
            <person name="Potrich D.P."/>
            <person name="Ramalho-Neto C.E."/>
            <person name="Reis A.M.M."/>
            <person name="Rigo L.U."/>
            <person name="Rondinelli E."/>
            <person name="Santos E.B.P."/>
            <person name="Santos F.R."/>
            <person name="Schneider M.P.C."/>
            <person name="Seuanez H.N."/>
            <person name="Silva A.M.R."/>
            <person name="da Silva A.L.C."/>
            <person name="Silva D.W."/>
            <person name="Silva R."/>
            <person name="Simoes I.C."/>
            <person name="Simon D."/>
            <person name="Soares C.M.A."/>
            <person name="Soares R.B.A."/>
            <person name="Souza E.M."/>
            <person name="Souza K.R.L."/>
            <person name="Souza R.C."/>
            <person name="Steffens M.B.R."/>
            <person name="Steindel M."/>
            <person name="Teixeira S.R."/>
            <person name="Urmenyi T."/>
            <person name="Vettore A."/>
            <person name="Wassem R."/>
            <person name="Zaha A."/>
            <person name="Simpson A.J.G."/>
        </authorList>
    </citation>
    <scope>NUCLEOTIDE SEQUENCE [LARGE SCALE GENOMIC DNA]</scope>
    <source>
        <strain>ATCC 12472 / DSM 30191 / JCM 1249 / CCUG 213 / NBRC 12614 / NCIMB 9131 / NCTC 9757 / MK</strain>
    </source>
</reference>
<comment type="function">
    <text evidence="1">Together with its co-chaperonin GroES, plays an essential role in assisting protein folding. The GroEL-GroES system forms a nano-cage that allows encapsulation of the non-native substrate proteins and provides a physical environment optimized to promote and accelerate protein folding.</text>
</comment>
<comment type="catalytic activity">
    <reaction evidence="1">
        <text>ATP + H2O + a folded polypeptide = ADP + phosphate + an unfolded polypeptide.</text>
        <dbReference type="EC" id="5.6.1.7"/>
    </reaction>
</comment>
<comment type="subunit">
    <text evidence="1">Forms a cylinder of 14 subunits composed of two heptameric rings stacked back-to-back. Interacts with the co-chaperonin GroES.</text>
</comment>
<comment type="subcellular location">
    <subcellularLocation>
        <location evidence="1">Cytoplasm</location>
    </subcellularLocation>
</comment>
<comment type="similarity">
    <text evidence="1">Belongs to the chaperonin (HSP60) family.</text>
</comment>
<organism>
    <name type="scientific">Chromobacterium violaceum (strain ATCC 12472 / DSM 30191 / JCM 1249 / CCUG 213 / NBRC 12614 / NCIMB 9131 / NCTC 9757 / MK)</name>
    <dbReference type="NCBI Taxonomy" id="243365"/>
    <lineage>
        <taxon>Bacteria</taxon>
        <taxon>Pseudomonadati</taxon>
        <taxon>Pseudomonadota</taxon>
        <taxon>Betaproteobacteria</taxon>
        <taxon>Neisseriales</taxon>
        <taxon>Chromobacteriaceae</taxon>
        <taxon>Chromobacterium</taxon>
    </lineage>
</organism>
<proteinExistence type="inferred from homology"/>
<sequence length="538" mass="56678">MAAKEVRFHDNARERIVNGVNVLADAVKVTLGPKGRNVLLARSFGAPHITKDGVSVAKEIELKDPFENMGAQMVKEVASKTADVAGDGTTTATVLAQAIVQEGMKYVASGMNPMDLKRGIDKAVHAVIKELQTLSKPVTNSKETAQVAALSANSDEAIGKIIADAMDKVGKEGVITVEDGKSLDNELAVVEGMQFDRGYLSPYFITDPEKQTAVLEDPLVLLYDKKISNIRDLLPVLEQVAKAGKPLLIVAEDVEGEALATLVVNSMRGILKVAAVKAPGFGDRRKAMLEDIAILTGGTVIAEETGLTLEKAGLAELGSAKRVEIGKENTTIIDGAGDKAKIDARVQAIRAQIDAATSDYDREKLQERVAKLSGGVAVIRIGAATEVEMKEKKDRVDDALHATRAAVEEGIVAGGGVALLRARAHIKELKGDNPDQDAGIQIVLRALEAPLRAIAANAGDEPSVIVNKVLEGKGNHGYNAASGQFGDLVEMGVIDPTKVTRTALQNAASIASLILTTDATVAEAGQDSKAKAPAELDY</sequence>
<keyword id="KW-0067">ATP-binding</keyword>
<keyword id="KW-0143">Chaperone</keyword>
<keyword id="KW-0963">Cytoplasm</keyword>
<keyword id="KW-0413">Isomerase</keyword>
<keyword id="KW-0547">Nucleotide-binding</keyword>
<keyword id="KW-1185">Reference proteome</keyword>